<dbReference type="EMBL" id="AF156605">
    <property type="protein sequence ID" value="AAF37800.1"/>
    <property type="molecule type" value="mRNA"/>
</dbReference>
<dbReference type="EMBL" id="AK122268">
    <property type="protein sequence ID" value="BAC65550.3"/>
    <property type="status" value="ALT_INIT"/>
    <property type="molecule type" value="Transcribed_RNA"/>
</dbReference>
<dbReference type="CCDS" id="CCDS30315.1"/>
<dbReference type="RefSeq" id="NP_062805.1">
    <property type="nucleotide sequence ID" value="NM_019831.3"/>
</dbReference>
<dbReference type="RefSeq" id="XP_006528226.1">
    <property type="nucleotide sequence ID" value="XM_006528163.5"/>
</dbReference>
<dbReference type="RefSeq" id="XP_006528227.1">
    <property type="nucleotide sequence ID" value="XM_006528164.3"/>
</dbReference>
<dbReference type="RefSeq" id="XP_006528228.1">
    <property type="nucleotide sequence ID" value="XM_006528165.4"/>
</dbReference>
<dbReference type="RefSeq" id="XP_006528229.1">
    <property type="nucleotide sequence ID" value="XM_006528166.4"/>
</dbReference>
<dbReference type="SMR" id="Q9JLM4"/>
<dbReference type="BioGRID" id="207927">
    <property type="interactions" value="3"/>
</dbReference>
<dbReference type="FunCoup" id="Q9JLM4">
    <property type="interactions" value="2577"/>
</dbReference>
<dbReference type="IntAct" id="Q9JLM4">
    <property type="interactions" value="1"/>
</dbReference>
<dbReference type="STRING" id="10090.ENSMUSP00000068197"/>
<dbReference type="GlyGen" id="Q9JLM4">
    <property type="glycosylation" value="1 site"/>
</dbReference>
<dbReference type="iPTMnet" id="Q9JLM4"/>
<dbReference type="PhosphoSitePlus" id="Q9JLM4"/>
<dbReference type="jPOST" id="Q9JLM4"/>
<dbReference type="PaxDb" id="10090-ENSMUSP00000068197"/>
<dbReference type="ProteomicsDB" id="299568"/>
<dbReference type="Pumba" id="Q9JLM4"/>
<dbReference type="Antibodypedia" id="524">
    <property type="antibodies" value="178 antibodies from 25 providers"/>
</dbReference>
<dbReference type="DNASU" id="56364"/>
<dbReference type="Ensembl" id="ENSMUST00000063577.10">
    <property type="protein sequence ID" value="ENSMUSP00000068197.4"/>
    <property type="gene ID" value="ENSMUSG00000031310.17"/>
</dbReference>
<dbReference type="GeneID" id="56364"/>
<dbReference type="KEGG" id="mmu:56364"/>
<dbReference type="UCSC" id="uc009txm.2">
    <property type="organism name" value="mouse"/>
</dbReference>
<dbReference type="AGR" id="MGI:1927231"/>
<dbReference type="CTD" id="9203"/>
<dbReference type="MGI" id="MGI:1927231">
    <property type="gene designation" value="Zmym3"/>
</dbReference>
<dbReference type="VEuPathDB" id="HostDB:ENSMUSG00000031310"/>
<dbReference type="eggNOG" id="ENOG502QQQ9">
    <property type="taxonomic scope" value="Eukaryota"/>
</dbReference>
<dbReference type="GeneTree" id="ENSGT00940000160693"/>
<dbReference type="InParanoid" id="Q9JLM4"/>
<dbReference type="OMA" id="XAARCHA"/>
<dbReference type="OrthoDB" id="10025028at2759"/>
<dbReference type="PhylomeDB" id="Q9JLM4"/>
<dbReference type="TreeFam" id="TF336988"/>
<dbReference type="BioGRID-ORCS" id="56364">
    <property type="hits" value="5 hits in 81 CRISPR screens"/>
</dbReference>
<dbReference type="PRO" id="PR:Q9JLM4"/>
<dbReference type="Proteomes" id="UP000000589">
    <property type="component" value="Chromosome X"/>
</dbReference>
<dbReference type="RNAct" id="Q9JLM4">
    <property type="molecule type" value="protein"/>
</dbReference>
<dbReference type="Bgee" id="ENSMUSG00000031310">
    <property type="expression patterns" value="Expressed in embryonic brain and 253 other cell types or tissues"/>
</dbReference>
<dbReference type="ExpressionAtlas" id="Q9JLM4">
    <property type="expression patterns" value="baseline and differential"/>
</dbReference>
<dbReference type="GO" id="GO:0005654">
    <property type="term" value="C:nucleoplasm"/>
    <property type="evidence" value="ECO:0007669"/>
    <property type="project" value="Ensembl"/>
</dbReference>
<dbReference type="GO" id="GO:0005634">
    <property type="term" value="C:nucleus"/>
    <property type="evidence" value="ECO:0000250"/>
    <property type="project" value="UniProtKB"/>
</dbReference>
<dbReference type="GO" id="GO:0008270">
    <property type="term" value="F:zinc ion binding"/>
    <property type="evidence" value="ECO:0007669"/>
    <property type="project" value="UniProtKB-KW"/>
</dbReference>
<dbReference type="GO" id="GO:0007010">
    <property type="term" value="P:cytoskeleton organization"/>
    <property type="evidence" value="ECO:0000250"/>
    <property type="project" value="UniProtKB"/>
</dbReference>
<dbReference type="GO" id="GO:0022604">
    <property type="term" value="P:regulation of cell morphogenesis"/>
    <property type="evidence" value="ECO:0000250"/>
    <property type="project" value="UniProtKB"/>
</dbReference>
<dbReference type="InterPro" id="IPR021893">
    <property type="entry name" value="DUF3504"/>
</dbReference>
<dbReference type="InterPro" id="IPR011017">
    <property type="entry name" value="TRASH_dom"/>
</dbReference>
<dbReference type="InterPro" id="IPR010507">
    <property type="entry name" value="Znf_MYM"/>
</dbReference>
<dbReference type="InterPro" id="IPR051284">
    <property type="entry name" value="ZnF_MYMT-QRICH1"/>
</dbReference>
<dbReference type="PANTHER" id="PTHR45736">
    <property type="entry name" value="ZINC FINGER MYM-TYPE PROTEIN"/>
    <property type="match status" value="1"/>
</dbReference>
<dbReference type="PANTHER" id="PTHR45736:SF3">
    <property type="entry name" value="ZINC FINGER MYM-TYPE PROTEIN 3"/>
    <property type="match status" value="1"/>
</dbReference>
<dbReference type="Pfam" id="PF12012">
    <property type="entry name" value="DUF3504"/>
    <property type="match status" value="1"/>
</dbReference>
<dbReference type="Pfam" id="PF06467">
    <property type="entry name" value="zf-FCS"/>
    <property type="match status" value="9"/>
</dbReference>
<dbReference type="SMART" id="SM00746">
    <property type="entry name" value="TRASH"/>
    <property type="match status" value="10"/>
</dbReference>
<dbReference type="SUPFAM" id="SSF57716">
    <property type="entry name" value="Glucocorticoid receptor-like (DNA-binding domain)"/>
    <property type="match status" value="1"/>
</dbReference>
<organism>
    <name type="scientific">Mus musculus</name>
    <name type="common">Mouse</name>
    <dbReference type="NCBI Taxonomy" id="10090"/>
    <lineage>
        <taxon>Eukaryota</taxon>
        <taxon>Metazoa</taxon>
        <taxon>Chordata</taxon>
        <taxon>Craniata</taxon>
        <taxon>Vertebrata</taxon>
        <taxon>Euteleostomi</taxon>
        <taxon>Mammalia</taxon>
        <taxon>Eutheria</taxon>
        <taxon>Euarchontoglires</taxon>
        <taxon>Glires</taxon>
        <taxon>Rodentia</taxon>
        <taxon>Myomorpha</taxon>
        <taxon>Muroidea</taxon>
        <taxon>Muridae</taxon>
        <taxon>Murinae</taxon>
        <taxon>Mus</taxon>
        <taxon>Mus</taxon>
    </lineage>
</organism>
<protein>
    <recommendedName>
        <fullName>Zinc finger MYM-type protein 3</fullName>
    </recommendedName>
    <alternativeName>
        <fullName>DXHXS6673E protein</fullName>
    </alternativeName>
    <alternativeName>
        <fullName>Zinc finger protein 261</fullName>
    </alternativeName>
</protein>
<gene>
    <name type="primary">Zmym3</name>
    <name type="synonym">Kiaa0385</name>
    <name type="synonym">Zfp261</name>
    <name type="synonym">Znf261</name>
</gene>
<sequence>MDPSDFPSPFDPLTLPEKPLAGDLPVDMEFGEDLLESQTAPSRGWAPPGPSPSSGALDLLDTPSGLEKDPGGVLDGATELLGLGGLLYKAPSPPEVDHGPEGTLAWDSGEQTLEPGPGCQTPEVMPPDPGAGASPPSPEGLLEPLAPDSPIILESPHIEEEIPPLATRRRGSPGQEEEHTQGQPQSPNAPPSPSVGETLGDGINSSQSKPGVCTPTAHPSLPGDGLTGKEIEKPPERVQKRSERVRRAEPPKPEVVDSTESIPVSDEDSDAMVDDPNDEDFVPFRPRRSPRMSLRSSMAQRAGRSSMGTKMSCAHCRTPLQKGQTAYQRKGLPQLFCSSSCLTTYSKKPLGRKTCTFCKKEIWNTKDSVVVQTGPGGSFHEFCTSVCLSLYEAQQQRPIPQSGDPADATRCSICQKTGEVLHEVSNGSVVHRLCSDSCFSKFRANKGLKTNCCDQCGAYIYARPGGLGPELLFHDGQQKRFCNTTCLGAYKKKNTRVYPCVWCKTLCKNFEMLSHVDRNGKTSLFCSLCCTTSYKVKQAGLTGPPRPCSFCRRSLSDPCYYNKVDRTVYQFCSPSCWTKFQHTSPEGGIHLSCHYCHSLFSGKPEVLEWQDQVFQFCCRDCCEDFKRLRGVVSQCEHCRQEKLLHEKLRFSGVEKSFCSEGCVLLYKQDFTKKLGLCCITCTYCSQTCQRGVTEQLDGSTWDFCSEDCKTKYLLWYCKAARCHACKRQGKLLETIHWRGQIRHFCNQQCLLRFYSQQNQPNLDTQSGPESLLNSQSSESKPQTPSQTKVENNHTVRTPDENGNLGKTPVKRATPSVPTPPPPPPPATPRKNKAAMCKPLMQNRGVSCKAEMKSKGSQTEEWKPQVIVLPIPVPIFVPVPMHLYCQKVPVPFSMPIPVPVPMFLPTTLESTEKIVETIEELKVKIPSNPLEADILAMAEMIAEAEELDKASSDLCDLVSNQSAEGLLEDCDLFGTARDDVLAMAVKMANVLDEPGQDLEADFPKNPLDINPSVDFLFDCGLVGPEDVSTEQDLPRAMRKGQKRLMLSESCSRDSLSSQPSCTGLNYSYGVNAWKCWVQSKYANGETSKGDELRFGPKPMRIKEDILACSAAELNYGLAQFVREITRPNGERYEPDSIYYLCLGIQQYLLENNRMVNIFTDLYYLTFVQELNKSLSTWQPTLLPNNTVFSRVEEEHLWECKQLGVYSPFVLLNTLMFFNTKFFGLQTAEEHMQLSFTNVVRQSRKCTTPRGTTKVVSIRYYAPVRQRKGRDTGPGKRKREDETILEQRENRMNPLRCPVKFYEFYLSKCPESLRTRNDVFYLQPERSCIAESPLWYSVIPMDRSMLESMLNRILAVREIYEELGRPGEEDLD</sequence>
<feature type="chain" id="PRO_0000191379" description="Zinc finger MYM-type protein 3">
    <location>
        <begin position="1"/>
        <end position="1370"/>
    </location>
</feature>
<feature type="zinc finger region" description="MYM-type 1">
    <location>
        <begin position="334"/>
        <end position="368"/>
    </location>
</feature>
<feature type="zinc finger region" description="MYM-type 2">
    <location>
        <begin position="380"/>
        <end position="424"/>
    </location>
</feature>
<feature type="zinc finger region" description="MYM-type 3">
    <location>
        <begin position="431"/>
        <end position="466"/>
    </location>
</feature>
<feature type="zinc finger region" description="MYM-type 4">
    <location>
        <begin position="479"/>
        <end position="513"/>
    </location>
</feature>
<feature type="zinc finger region" description="MYM-type 5">
    <location>
        <begin position="523"/>
        <end position="561"/>
    </location>
</feature>
<feature type="zinc finger region" description="MYM-type 6">
    <location>
        <begin position="569"/>
        <end position="606"/>
    </location>
</feature>
<feature type="zinc finger region" description="MYM-type 7">
    <location>
        <begin position="614"/>
        <end position="648"/>
    </location>
</feature>
<feature type="zinc finger region" description="MYM-type 8">
    <location>
        <begin position="655"/>
        <end position="694"/>
    </location>
</feature>
<feature type="zinc finger region" description="MYM-type 9">
    <location>
        <begin position="701"/>
        <end position="735"/>
    </location>
</feature>
<feature type="region of interest" description="Disordered" evidence="2">
    <location>
        <begin position="1"/>
        <end position="73"/>
    </location>
</feature>
<feature type="region of interest" description="Disordered" evidence="2">
    <location>
        <begin position="85"/>
        <end position="310"/>
    </location>
</feature>
<feature type="region of interest" description="Disordered" evidence="2">
    <location>
        <begin position="761"/>
        <end position="831"/>
    </location>
</feature>
<feature type="compositionally biased region" description="Low complexity" evidence="2">
    <location>
        <begin position="1"/>
        <end position="12"/>
    </location>
</feature>
<feature type="compositionally biased region" description="Low complexity" evidence="2">
    <location>
        <begin position="40"/>
        <end position="56"/>
    </location>
</feature>
<feature type="compositionally biased region" description="Low complexity" evidence="2">
    <location>
        <begin position="130"/>
        <end position="146"/>
    </location>
</feature>
<feature type="compositionally biased region" description="Basic and acidic residues" evidence="2">
    <location>
        <begin position="227"/>
        <end position="255"/>
    </location>
</feature>
<feature type="compositionally biased region" description="Acidic residues" evidence="2">
    <location>
        <begin position="265"/>
        <end position="281"/>
    </location>
</feature>
<feature type="compositionally biased region" description="Polar residues" evidence="2">
    <location>
        <begin position="761"/>
        <end position="789"/>
    </location>
</feature>
<feature type="compositionally biased region" description="Basic and acidic residues" evidence="2">
    <location>
        <begin position="790"/>
        <end position="799"/>
    </location>
</feature>
<feature type="compositionally biased region" description="Pro residues" evidence="2">
    <location>
        <begin position="816"/>
        <end position="827"/>
    </location>
</feature>
<feature type="modified residue" description="Phosphoserine" evidence="5">
    <location>
        <position position="265"/>
    </location>
</feature>
<feature type="modified residue" description="Phosphoserine" evidence="5">
    <location>
        <position position="269"/>
    </location>
</feature>
<feature type="modified residue" description="Phosphothreonine" evidence="1">
    <location>
        <position position="797"/>
    </location>
</feature>
<feature type="modified residue" description="Phosphothreonine" evidence="1">
    <location>
        <position position="818"/>
    </location>
</feature>
<feature type="modified residue" description="Phosphothreonine" evidence="1">
    <location>
        <position position="827"/>
    </location>
</feature>
<feature type="cross-link" description="Glycyl lysine isopeptide (Lys-Gly) (interchain with G-Cter in SUMO2)" evidence="1">
    <location>
        <position position="310"/>
    </location>
</feature>
<feature type="cross-link" description="Glycyl lysine isopeptide (Lys-Gly) (interchain with G-Cter in SUMO2)" evidence="1">
    <location>
        <position position="322"/>
    </location>
</feature>
<feature type="cross-link" description="Glycyl lysine isopeptide (Lys-Gly) (interchain with G-Cter in SUMO2)" evidence="1">
    <location>
        <position position="330"/>
    </location>
</feature>
<feature type="cross-link" description="Glycyl lysine isopeptide (Lys-Gly) (interchain with G-Cter in SUMO2)" evidence="1">
    <location>
        <position position="780"/>
    </location>
</feature>
<feature type="cross-link" description="Glycyl lysine isopeptide (Lys-Gly) (interchain with G-Cter in SUMO2)" evidence="1">
    <location>
        <position position="788"/>
    </location>
</feature>
<feature type="cross-link" description="Glycyl lysine isopeptide (Lys-Gly) (interchain with G-Cter in SUMO2)" evidence="1">
    <location>
        <position position="806"/>
    </location>
</feature>
<feature type="cross-link" description="Glycyl lysine isopeptide (Lys-Gly) (interchain with G-Cter in SUMO2)" evidence="1">
    <location>
        <position position="848"/>
    </location>
</feature>
<feature type="cross-link" description="Glycyl lysine isopeptide (Lys-Gly) (interchain with G-Cter in SUMO2)" evidence="1">
    <location>
        <position position="862"/>
    </location>
</feature>
<feature type="cross-link" description="Glycyl lysine isopeptide (Lys-Gly) (interchain with G-Cter in SUMO2)" evidence="1">
    <location>
        <position position="921"/>
    </location>
</feature>
<feature type="cross-link" description="Glycyl lysine isopeptide (Lys-Gly) (interchain with G-Cter in SUMO2)" evidence="1">
    <location>
        <position position="1276"/>
    </location>
</feature>
<feature type="sequence conflict" description="In Ref. 2; BAC65550." evidence="4" ref="2">
    <location>
        <begin position="238"/>
        <end position="239"/>
    </location>
</feature>
<feature type="sequence conflict" description="In Ref. 2; BAC65550." evidence="4" ref="2">
    <original>KNT</original>
    <variation>VGP</variation>
    <location>
        <begin position="493"/>
        <end position="495"/>
    </location>
</feature>
<feature type="sequence conflict" description="In Ref. 2; BAC65550." evidence="4" ref="2">
    <original>AARCHACKRQGKLLETI</original>
    <variation>VRRVNRAERRQQGDELW</variation>
    <location>
        <begin position="719"/>
        <end position="735"/>
    </location>
</feature>
<comment type="function">
    <text evidence="1">Plays a role in the regulation of cell morphology and cytoskeletal organization.</text>
</comment>
<comment type="subunit">
    <text evidence="1">May be a component of a BHC histone deacetylase complex that contains HDAC1, HDAC2, HMG20B/BRAF35, KDM1A, RCOR1/CoREST, PHF21A/BHC80, ZMYM2, ZNF217, ZMYM3, GSE1 and GTF2I.</text>
</comment>
<comment type="interaction">
    <interactant intactId="EBI-12517169">
        <id>Q9JLM4</id>
    </interactant>
    <interactant intactId="EBI-372530">
        <id>Q9UHL9</id>
        <label>GTF2IRD1</label>
    </interactant>
    <organismsDiffer>true</organismsDiffer>
    <experiments>3</experiments>
</comment>
<comment type="subcellular location">
    <subcellularLocation>
        <location evidence="3">Nucleus</location>
    </subcellularLocation>
</comment>
<comment type="tissue specificity">
    <text evidence="3">Ubiquitously expressed in all embryonic stages and adult tissues.</text>
</comment>
<comment type="sequence caution" evidence="4">
    <conflict type="erroneous initiation">
        <sequence resource="EMBL-CDS" id="BAC65550"/>
    </conflict>
    <text>Extended N-terminus.</text>
</comment>
<name>ZMYM3_MOUSE</name>
<reference key="1">
    <citation type="journal article" date="2000" name="Genomics">
        <title>DXS6673E encodes a predominantly nuclear protein, and its mouse ortholog DXHXS6673E is alternatively spliced in a developmental- and tissue-specific manner.</title>
        <authorList>
            <person name="Scheer M.P."/>
            <person name="van der Maarel S.M."/>
            <person name="Kuebart S."/>
            <person name="Schulz A."/>
            <person name="Wirth J."/>
            <person name="Schweiger S."/>
            <person name="Ropers H.-H."/>
            <person name="Nothwang H.G."/>
        </authorList>
    </citation>
    <scope>NUCLEOTIDE SEQUENCE [MRNA]</scope>
    <scope>SUBCELLULAR LOCATION</scope>
    <scope>TISSUE SPECIFICITY</scope>
    <source>
        <tissue>Brain</tissue>
    </source>
</reference>
<reference key="2">
    <citation type="journal article" date="2003" name="DNA Res.">
        <title>Prediction of the coding sequences of mouse homologues of KIAA gene: II. The complete nucleotide sequences of 400 mouse KIAA-homologous cDNAs identified by screening of terminal sequences of cDNA clones randomly sampled from size-fractionated libraries.</title>
        <authorList>
            <person name="Okazaki N."/>
            <person name="Kikuno R."/>
            <person name="Ohara R."/>
            <person name="Inamoto S."/>
            <person name="Aizawa H."/>
            <person name="Yuasa S."/>
            <person name="Nakajima D."/>
            <person name="Nagase T."/>
            <person name="Ohara O."/>
            <person name="Koga H."/>
        </authorList>
    </citation>
    <scope>NUCLEOTIDE SEQUENCE [LARGE SCALE MRNA]</scope>
    <source>
        <tissue>Brain</tissue>
    </source>
</reference>
<reference key="3">
    <citation type="journal article" date="2010" name="Cell">
        <title>A tissue-specific atlas of mouse protein phosphorylation and expression.</title>
        <authorList>
            <person name="Huttlin E.L."/>
            <person name="Jedrychowski M.P."/>
            <person name="Elias J.E."/>
            <person name="Goswami T."/>
            <person name="Rad R."/>
            <person name="Beausoleil S.A."/>
            <person name="Villen J."/>
            <person name="Haas W."/>
            <person name="Sowa M.E."/>
            <person name="Gygi S.P."/>
        </authorList>
    </citation>
    <scope>PHOSPHORYLATION [LARGE SCALE ANALYSIS] AT SER-265 AND SER-269</scope>
    <scope>IDENTIFICATION BY MASS SPECTROMETRY [LARGE SCALE ANALYSIS]</scope>
    <source>
        <tissue>Brain</tissue>
        <tissue>Kidney</tissue>
        <tissue>Testis</tissue>
    </source>
</reference>
<proteinExistence type="evidence at protein level"/>
<keyword id="KW-1017">Isopeptide bond</keyword>
<keyword id="KW-0479">Metal-binding</keyword>
<keyword id="KW-0539">Nucleus</keyword>
<keyword id="KW-0597">Phosphoprotein</keyword>
<keyword id="KW-1185">Reference proteome</keyword>
<keyword id="KW-0677">Repeat</keyword>
<keyword id="KW-0832">Ubl conjugation</keyword>
<keyword id="KW-0862">Zinc</keyword>
<keyword id="KW-0863">Zinc-finger</keyword>
<evidence type="ECO:0000250" key="1">
    <source>
        <dbReference type="UniProtKB" id="Q14202"/>
    </source>
</evidence>
<evidence type="ECO:0000256" key="2">
    <source>
        <dbReference type="SAM" id="MobiDB-lite"/>
    </source>
</evidence>
<evidence type="ECO:0000269" key="3">
    <source>
    </source>
</evidence>
<evidence type="ECO:0000305" key="4"/>
<evidence type="ECO:0007744" key="5">
    <source>
    </source>
</evidence>
<accession>Q9JLM4</accession>
<accession>Q80U17</accession>